<keyword id="KW-0479">Metal-binding</keyword>
<keyword id="KW-1185">Reference proteome</keyword>
<keyword id="KW-0687">Ribonucleoprotein</keyword>
<keyword id="KW-0689">Ribosomal protein</keyword>
<keyword id="KW-0694">RNA-binding</keyword>
<keyword id="KW-0699">rRNA-binding</keyword>
<keyword id="KW-0862">Zinc</keyword>
<dbReference type="EMBL" id="AM180088">
    <property type="protein sequence ID" value="CAJ52935.1"/>
    <property type="molecule type" value="Genomic_DNA"/>
</dbReference>
<dbReference type="RefSeq" id="WP_011572048.1">
    <property type="nucleotide sequence ID" value="NC_008212.1"/>
</dbReference>
<dbReference type="SMR" id="Q18GG3"/>
<dbReference type="STRING" id="362976.HQ_2828A"/>
<dbReference type="GeneID" id="4194650"/>
<dbReference type="KEGG" id="hwa:HQ_2828A"/>
<dbReference type="eggNOG" id="arCOG00782">
    <property type="taxonomic scope" value="Archaea"/>
</dbReference>
<dbReference type="HOGENOM" id="CLU_177289_2_1_2"/>
<dbReference type="Proteomes" id="UP000001975">
    <property type="component" value="Chromosome"/>
</dbReference>
<dbReference type="GO" id="GO:0022627">
    <property type="term" value="C:cytosolic small ribosomal subunit"/>
    <property type="evidence" value="ECO:0007669"/>
    <property type="project" value="TreeGrafter"/>
</dbReference>
<dbReference type="GO" id="GO:0019843">
    <property type="term" value="F:rRNA binding"/>
    <property type="evidence" value="ECO:0007669"/>
    <property type="project" value="UniProtKB-UniRule"/>
</dbReference>
<dbReference type="GO" id="GO:0003735">
    <property type="term" value="F:structural constituent of ribosome"/>
    <property type="evidence" value="ECO:0007669"/>
    <property type="project" value="InterPro"/>
</dbReference>
<dbReference type="GO" id="GO:0008270">
    <property type="term" value="F:zinc ion binding"/>
    <property type="evidence" value="ECO:0007669"/>
    <property type="project" value="UniProtKB-UniRule"/>
</dbReference>
<dbReference type="GO" id="GO:0002181">
    <property type="term" value="P:cytoplasmic translation"/>
    <property type="evidence" value="ECO:0007669"/>
    <property type="project" value="TreeGrafter"/>
</dbReference>
<dbReference type="FunFam" id="4.10.830.10:FF:000002">
    <property type="entry name" value="40S ribosomal protein S29"/>
    <property type="match status" value="1"/>
</dbReference>
<dbReference type="Gene3D" id="4.10.830.10">
    <property type="entry name" value="30s Ribosomal Protein S14, Chain N"/>
    <property type="match status" value="1"/>
</dbReference>
<dbReference type="HAMAP" id="MF_01364_A">
    <property type="entry name" value="Ribosomal_uS14_2_A"/>
    <property type="match status" value="1"/>
</dbReference>
<dbReference type="InterPro" id="IPR001209">
    <property type="entry name" value="Ribosomal_uS14"/>
</dbReference>
<dbReference type="InterPro" id="IPR023676">
    <property type="entry name" value="Ribosomal_uS14_arc"/>
</dbReference>
<dbReference type="InterPro" id="IPR018271">
    <property type="entry name" value="Ribosomal_uS14_CS"/>
</dbReference>
<dbReference type="InterPro" id="IPR039744">
    <property type="entry name" value="RIbosomal_uS14_euk_arc"/>
</dbReference>
<dbReference type="InterPro" id="IPR043140">
    <property type="entry name" value="Ribosomal_uS14_sf"/>
</dbReference>
<dbReference type="NCBIfam" id="NF004424">
    <property type="entry name" value="PRK05766.1"/>
    <property type="match status" value="1"/>
</dbReference>
<dbReference type="PANTHER" id="PTHR12010">
    <property type="entry name" value="40S RIBOSOMAL PROTEIN S29"/>
    <property type="match status" value="1"/>
</dbReference>
<dbReference type="PANTHER" id="PTHR12010:SF2">
    <property type="entry name" value="40S RIBOSOMAL PROTEIN S29"/>
    <property type="match status" value="1"/>
</dbReference>
<dbReference type="Pfam" id="PF00253">
    <property type="entry name" value="Ribosomal_S14"/>
    <property type="match status" value="1"/>
</dbReference>
<dbReference type="SUPFAM" id="SSF57716">
    <property type="entry name" value="Glucocorticoid receptor-like (DNA-binding domain)"/>
    <property type="match status" value="1"/>
</dbReference>
<dbReference type="PROSITE" id="PS00527">
    <property type="entry name" value="RIBOSOMAL_S14"/>
    <property type="match status" value="1"/>
</dbReference>
<gene>
    <name evidence="1" type="primary">rps14</name>
    <name type="ordered locus">HQ_2828A</name>
</gene>
<organism>
    <name type="scientific">Haloquadratum walsbyi (strain DSM 16790 / HBSQ001)</name>
    <dbReference type="NCBI Taxonomy" id="362976"/>
    <lineage>
        <taxon>Archaea</taxon>
        <taxon>Methanobacteriati</taxon>
        <taxon>Methanobacteriota</taxon>
        <taxon>Stenosarchaea group</taxon>
        <taxon>Halobacteria</taxon>
        <taxon>Halobacteriales</taxon>
        <taxon>Haloferacaceae</taxon>
        <taxon>Haloquadratum</taxon>
    </lineage>
</organism>
<sequence>MSESETEQTGEHASHRTGQTHECRRCGRNQGLVGKYDIYLCRQCFREVARDMGFKKYR</sequence>
<protein>
    <recommendedName>
        <fullName evidence="1">Small ribosomal subunit protein uS14</fullName>
    </recommendedName>
    <alternativeName>
        <fullName evidence="3">30S ribosomal protein S14 type Z</fullName>
    </alternativeName>
</protein>
<name>RS14Z_HALWD</name>
<feature type="chain" id="PRO_0000269158" description="Small ribosomal subunit protein uS14">
    <location>
        <begin position="1"/>
        <end position="58"/>
    </location>
</feature>
<feature type="region of interest" description="Disordered" evidence="2">
    <location>
        <begin position="1"/>
        <end position="21"/>
    </location>
</feature>
<feature type="compositionally biased region" description="Basic and acidic residues" evidence="2">
    <location>
        <begin position="9"/>
        <end position="21"/>
    </location>
</feature>
<feature type="binding site" evidence="1">
    <location>
        <position position="23"/>
    </location>
    <ligand>
        <name>Zn(2+)</name>
        <dbReference type="ChEBI" id="CHEBI:29105"/>
    </ligand>
</feature>
<feature type="binding site" evidence="1">
    <location>
        <position position="26"/>
    </location>
    <ligand>
        <name>Zn(2+)</name>
        <dbReference type="ChEBI" id="CHEBI:29105"/>
    </ligand>
</feature>
<feature type="binding site" evidence="1">
    <location>
        <position position="41"/>
    </location>
    <ligand>
        <name>Zn(2+)</name>
        <dbReference type="ChEBI" id="CHEBI:29105"/>
    </ligand>
</feature>
<feature type="binding site" evidence="1">
    <location>
        <position position="44"/>
    </location>
    <ligand>
        <name>Zn(2+)</name>
        <dbReference type="ChEBI" id="CHEBI:29105"/>
    </ligand>
</feature>
<evidence type="ECO:0000255" key="1">
    <source>
        <dbReference type="HAMAP-Rule" id="MF_01364"/>
    </source>
</evidence>
<evidence type="ECO:0000256" key="2">
    <source>
        <dbReference type="SAM" id="MobiDB-lite"/>
    </source>
</evidence>
<evidence type="ECO:0000305" key="3"/>
<accession>Q18GG3</accession>
<comment type="function">
    <text evidence="1">Binds 16S rRNA, required for the assembly of 30S particles.</text>
</comment>
<comment type="cofactor">
    <cofactor evidence="1">
        <name>Zn(2+)</name>
        <dbReference type="ChEBI" id="CHEBI:29105"/>
    </cofactor>
    <text evidence="1">Binds 1 zinc ion per subunit.</text>
</comment>
<comment type="subunit">
    <text evidence="1">Part of the 30S ribosomal subunit.</text>
</comment>
<comment type="similarity">
    <text evidence="1">Belongs to the universal ribosomal protein uS14 family. Zinc-binding uS14 subfamily.</text>
</comment>
<proteinExistence type="inferred from homology"/>
<reference key="1">
    <citation type="journal article" date="2006" name="BMC Genomics">
        <title>The genome of the square archaeon Haloquadratum walsbyi: life at the limits of water activity.</title>
        <authorList>
            <person name="Bolhuis H."/>
            <person name="Palm P."/>
            <person name="Wende A."/>
            <person name="Falb M."/>
            <person name="Rampp M."/>
            <person name="Rodriguez-Valera F."/>
            <person name="Pfeiffer F."/>
            <person name="Oesterhelt D."/>
        </authorList>
    </citation>
    <scope>NUCLEOTIDE SEQUENCE [LARGE SCALE GENOMIC DNA]</scope>
    <source>
        <strain>DSM 16790 / HBSQ001</strain>
    </source>
</reference>